<feature type="chain" id="PRO_0000364988" description="Ferredoxin--NADP reductase">
    <location>
        <begin position="1"/>
        <end position="331"/>
    </location>
</feature>
<feature type="binding site" evidence="1">
    <location>
        <position position="14"/>
    </location>
    <ligand>
        <name>FAD</name>
        <dbReference type="ChEBI" id="CHEBI:57692"/>
    </ligand>
</feature>
<feature type="binding site" evidence="1">
    <location>
        <position position="33"/>
    </location>
    <ligand>
        <name>FAD</name>
        <dbReference type="ChEBI" id="CHEBI:57692"/>
    </ligand>
</feature>
<feature type="binding site" evidence="1">
    <location>
        <position position="41"/>
    </location>
    <ligand>
        <name>FAD</name>
        <dbReference type="ChEBI" id="CHEBI:57692"/>
    </ligand>
</feature>
<feature type="binding site" evidence="1">
    <location>
        <position position="46"/>
    </location>
    <ligand>
        <name>FAD</name>
        <dbReference type="ChEBI" id="CHEBI:57692"/>
    </ligand>
</feature>
<feature type="binding site" evidence="1">
    <location>
        <position position="86"/>
    </location>
    <ligand>
        <name>FAD</name>
        <dbReference type="ChEBI" id="CHEBI:57692"/>
    </ligand>
</feature>
<feature type="binding site" evidence="1">
    <location>
        <position position="120"/>
    </location>
    <ligand>
        <name>FAD</name>
        <dbReference type="ChEBI" id="CHEBI:57692"/>
    </ligand>
</feature>
<feature type="binding site" evidence="1">
    <location>
        <position position="284"/>
    </location>
    <ligand>
        <name>FAD</name>
        <dbReference type="ChEBI" id="CHEBI:57692"/>
    </ligand>
</feature>
<feature type="binding site" evidence="1">
    <location>
        <position position="327"/>
    </location>
    <ligand>
        <name>FAD</name>
        <dbReference type="ChEBI" id="CHEBI:57692"/>
    </ligand>
</feature>
<name>FENR_PICTO</name>
<accession>Q6L1Y6</accession>
<protein>
    <recommendedName>
        <fullName evidence="1">Ferredoxin--NADP reductase</fullName>
        <shortName evidence="1">FNR</shortName>
        <shortName evidence="1">Fd-NADP(+) reductase</shortName>
        <ecNumber evidence="1">1.18.1.2</ecNumber>
    </recommendedName>
</protein>
<sequence>MEDYDLVIIGAGPTGLFATFLAGLRDIKSITLEALDYVGGQIPELYPEKPVYDVQGIPKINAIKLRDQMYEQAKTFNNRIELNSKVTDIIKENDIFKIEVNGVYKYNARAVLLCTGIGDFTPRKIGCEGEDRFFNKGLTYTVKDTEKFRDLTVAVVGGGDSALDYATELANTARHVYIIHHSENFKAAEKTIDLARKNEKITFIVNSSVISIDGGSKLESIKIKNELTNDISELGLDALVVAIGHVGRANIYKSLPLQLSPNKRGVLVNSKLETNIPGIYAAGDVASVEGEPANPLIAIGGAQAYQAINYIKKYINPQASFFGGHSSNLKI</sequence>
<gene>
    <name type="ordered locus">PTO0431</name>
</gene>
<dbReference type="EC" id="1.18.1.2" evidence="1"/>
<dbReference type="EMBL" id="AE017261">
    <property type="protein sequence ID" value="AAT43016.1"/>
    <property type="molecule type" value="Genomic_DNA"/>
</dbReference>
<dbReference type="RefSeq" id="WP_011177232.1">
    <property type="nucleotide sequence ID" value="NC_005877.1"/>
</dbReference>
<dbReference type="SMR" id="Q6L1Y6"/>
<dbReference type="STRING" id="263820.PTO0431"/>
<dbReference type="PaxDb" id="263820-PTO0431"/>
<dbReference type="GeneID" id="2843938"/>
<dbReference type="KEGG" id="pto:PTO0431"/>
<dbReference type="eggNOG" id="arCOG01296">
    <property type="taxonomic scope" value="Archaea"/>
</dbReference>
<dbReference type="HOGENOM" id="CLU_031864_5_5_2"/>
<dbReference type="InParanoid" id="Q6L1Y6"/>
<dbReference type="OrthoDB" id="27340at2157"/>
<dbReference type="Proteomes" id="UP000000438">
    <property type="component" value="Chromosome"/>
</dbReference>
<dbReference type="GO" id="GO:0004324">
    <property type="term" value="F:ferredoxin-NADP+ reductase activity"/>
    <property type="evidence" value="ECO:0007669"/>
    <property type="project" value="UniProtKB-UniRule"/>
</dbReference>
<dbReference type="GO" id="GO:0050660">
    <property type="term" value="F:flavin adenine dinucleotide binding"/>
    <property type="evidence" value="ECO:0007669"/>
    <property type="project" value="UniProtKB-UniRule"/>
</dbReference>
<dbReference type="GO" id="GO:0050661">
    <property type="term" value="F:NADP binding"/>
    <property type="evidence" value="ECO:0007669"/>
    <property type="project" value="UniProtKB-UniRule"/>
</dbReference>
<dbReference type="Gene3D" id="3.50.50.60">
    <property type="entry name" value="FAD/NAD(P)-binding domain"/>
    <property type="match status" value="2"/>
</dbReference>
<dbReference type="HAMAP" id="MF_01685">
    <property type="entry name" value="FENR2"/>
    <property type="match status" value="1"/>
</dbReference>
<dbReference type="InterPro" id="IPR036188">
    <property type="entry name" value="FAD/NAD-bd_sf"/>
</dbReference>
<dbReference type="InterPro" id="IPR023753">
    <property type="entry name" value="FAD/NAD-binding_dom"/>
</dbReference>
<dbReference type="InterPro" id="IPR022890">
    <property type="entry name" value="Fd--NADP_Rdtase_type_2"/>
</dbReference>
<dbReference type="InterPro" id="IPR050097">
    <property type="entry name" value="Ferredoxin-NADP_redctase_2"/>
</dbReference>
<dbReference type="PANTHER" id="PTHR48105">
    <property type="entry name" value="THIOREDOXIN REDUCTASE 1-RELATED-RELATED"/>
    <property type="match status" value="1"/>
</dbReference>
<dbReference type="Pfam" id="PF07992">
    <property type="entry name" value="Pyr_redox_2"/>
    <property type="match status" value="1"/>
</dbReference>
<dbReference type="PRINTS" id="PR00368">
    <property type="entry name" value="FADPNR"/>
</dbReference>
<dbReference type="PRINTS" id="PR00469">
    <property type="entry name" value="PNDRDTASEII"/>
</dbReference>
<dbReference type="SUPFAM" id="SSF51905">
    <property type="entry name" value="FAD/NAD(P)-binding domain"/>
    <property type="match status" value="1"/>
</dbReference>
<keyword id="KW-0274">FAD</keyword>
<keyword id="KW-0285">Flavoprotein</keyword>
<keyword id="KW-0521">NADP</keyword>
<keyword id="KW-0560">Oxidoreductase</keyword>
<comment type="catalytic activity">
    <reaction evidence="1">
        <text>2 reduced [2Fe-2S]-[ferredoxin] + NADP(+) + H(+) = 2 oxidized [2Fe-2S]-[ferredoxin] + NADPH</text>
        <dbReference type="Rhea" id="RHEA:20125"/>
        <dbReference type="Rhea" id="RHEA-COMP:10000"/>
        <dbReference type="Rhea" id="RHEA-COMP:10001"/>
        <dbReference type="ChEBI" id="CHEBI:15378"/>
        <dbReference type="ChEBI" id="CHEBI:33737"/>
        <dbReference type="ChEBI" id="CHEBI:33738"/>
        <dbReference type="ChEBI" id="CHEBI:57783"/>
        <dbReference type="ChEBI" id="CHEBI:58349"/>
        <dbReference type="EC" id="1.18.1.2"/>
    </reaction>
</comment>
<comment type="cofactor">
    <cofactor evidence="1">
        <name>FAD</name>
        <dbReference type="ChEBI" id="CHEBI:57692"/>
    </cofactor>
    <text evidence="1">Binds 1 FAD per subunit.</text>
</comment>
<comment type="subunit">
    <text evidence="1">Homodimer.</text>
</comment>
<comment type="similarity">
    <text evidence="1">Belongs to the ferredoxin--NADP reductase type 2 family.</text>
</comment>
<proteinExistence type="inferred from homology"/>
<evidence type="ECO:0000255" key="1">
    <source>
        <dbReference type="HAMAP-Rule" id="MF_01685"/>
    </source>
</evidence>
<reference key="1">
    <citation type="journal article" date="2004" name="Proc. Natl. Acad. Sci. U.S.A.">
        <title>Genome sequence of Picrophilus torridus and its implications for life around pH 0.</title>
        <authorList>
            <person name="Fuetterer O."/>
            <person name="Angelov A."/>
            <person name="Liesegang H."/>
            <person name="Gottschalk G."/>
            <person name="Schleper C."/>
            <person name="Schepers B."/>
            <person name="Dock C."/>
            <person name="Antranikian G."/>
            <person name="Liebl W."/>
        </authorList>
    </citation>
    <scope>NUCLEOTIDE SEQUENCE [LARGE SCALE GENOMIC DNA]</scope>
    <source>
        <strain>ATCC 700027 / DSM 9790 / JCM 10055 / NBRC 100828 / KAW 2/3</strain>
    </source>
</reference>
<organism>
    <name type="scientific">Picrophilus torridus (strain ATCC 700027 / DSM 9790 / JCM 10055 / NBRC 100828 / KAW 2/3)</name>
    <dbReference type="NCBI Taxonomy" id="1122961"/>
    <lineage>
        <taxon>Archaea</taxon>
        <taxon>Methanobacteriati</taxon>
        <taxon>Thermoplasmatota</taxon>
        <taxon>Thermoplasmata</taxon>
        <taxon>Thermoplasmatales</taxon>
        <taxon>Picrophilaceae</taxon>
        <taxon>Picrophilus</taxon>
    </lineage>
</organism>